<dbReference type="EMBL" id="DQ422812">
    <property type="protein sequence ID" value="ABD62243.2"/>
    <property type="molecule type" value="Genomic_DNA"/>
</dbReference>
<dbReference type="RefSeq" id="YP_001019082.1">
    <property type="nucleotide sequence ID" value="NC_008822.1"/>
</dbReference>
<dbReference type="SMR" id="Q19VB6"/>
<dbReference type="GeneID" id="4783256"/>
<dbReference type="GO" id="GO:0009507">
    <property type="term" value="C:chloroplast"/>
    <property type="evidence" value="ECO:0007669"/>
    <property type="project" value="UniProtKB-SubCell"/>
</dbReference>
<dbReference type="GO" id="GO:1990904">
    <property type="term" value="C:ribonucleoprotein complex"/>
    <property type="evidence" value="ECO:0007669"/>
    <property type="project" value="UniProtKB-KW"/>
</dbReference>
<dbReference type="GO" id="GO:0005840">
    <property type="term" value="C:ribosome"/>
    <property type="evidence" value="ECO:0007669"/>
    <property type="project" value="UniProtKB-KW"/>
</dbReference>
<dbReference type="GO" id="GO:0019843">
    <property type="term" value="F:rRNA binding"/>
    <property type="evidence" value="ECO:0007669"/>
    <property type="project" value="UniProtKB-UniRule"/>
</dbReference>
<dbReference type="GO" id="GO:0003735">
    <property type="term" value="F:structural constituent of ribosome"/>
    <property type="evidence" value="ECO:0007669"/>
    <property type="project" value="InterPro"/>
</dbReference>
<dbReference type="GO" id="GO:0006412">
    <property type="term" value="P:translation"/>
    <property type="evidence" value="ECO:0007669"/>
    <property type="project" value="UniProtKB-UniRule"/>
</dbReference>
<dbReference type="FunFam" id="3.30.420.80:FF:000001">
    <property type="entry name" value="30S ribosomal protein S11"/>
    <property type="match status" value="1"/>
</dbReference>
<dbReference type="Gene3D" id="3.30.420.80">
    <property type="entry name" value="Ribosomal protein S11"/>
    <property type="match status" value="1"/>
</dbReference>
<dbReference type="HAMAP" id="MF_01310">
    <property type="entry name" value="Ribosomal_uS11"/>
    <property type="match status" value="1"/>
</dbReference>
<dbReference type="InterPro" id="IPR001971">
    <property type="entry name" value="Ribosomal_uS11"/>
</dbReference>
<dbReference type="InterPro" id="IPR019981">
    <property type="entry name" value="Ribosomal_uS11_bac-type"/>
</dbReference>
<dbReference type="InterPro" id="IPR018102">
    <property type="entry name" value="Ribosomal_uS11_CS"/>
</dbReference>
<dbReference type="InterPro" id="IPR036967">
    <property type="entry name" value="Ribosomal_uS11_sf"/>
</dbReference>
<dbReference type="NCBIfam" id="NF003698">
    <property type="entry name" value="PRK05309.1"/>
    <property type="match status" value="1"/>
</dbReference>
<dbReference type="NCBIfam" id="TIGR03632">
    <property type="entry name" value="uS11_bact"/>
    <property type="match status" value="1"/>
</dbReference>
<dbReference type="PANTHER" id="PTHR11759">
    <property type="entry name" value="40S RIBOSOMAL PROTEIN S14/30S RIBOSOMAL PROTEIN S11"/>
    <property type="match status" value="1"/>
</dbReference>
<dbReference type="Pfam" id="PF00411">
    <property type="entry name" value="Ribosomal_S11"/>
    <property type="match status" value="1"/>
</dbReference>
<dbReference type="PIRSF" id="PIRSF002131">
    <property type="entry name" value="Ribosomal_S11"/>
    <property type="match status" value="1"/>
</dbReference>
<dbReference type="SUPFAM" id="SSF53137">
    <property type="entry name" value="Translational machinery components"/>
    <property type="match status" value="1"/>
</dbReference>
<dbReference type="PROSITE" id="PS00054">
    <property type="entry name" value="RIBOSOMAL_S11"/>
    <property type="match status" value="1"/>
</dbReference>
<gene>
    <name evidence="1" type="primary">rps11</name>
</gene>
<accession>Q19VB6</accession>
<protein>
    <recommendedName>
        <fullName evidence="1">Small ribosomal subunit protein uS11c</fullName>
    </recommendedName>
    <alternativeName>
        <fullName evidence="2">30S ribosomal protein S11, chloroplastic</fullName>
    </alternativeName>
</protein>
<geneLocation type="chloroplast"/>
<name>RR11_CHLAT</name>
<feature type="chain" id="PRO_0000294914" description="Small ribosomal subunit protein uS11c">
    <location>
        <begin position="1"/>
        <end position="130"/>
    </location>
</feature>
<keyword id="KW-0150">Chloroplast</keyword>
<keyword id="KW-0934">Plastid</keyword>
<keyword id="KW-0687">Ribonucleoprotein</keyword>
<keyword id="KW-0689">Ribosomal protein</keyword>
<keyword id="KW-0694">RNA-binding</keyword>
<keyword id="KW-0699">rRNA-binding</keyword>
<comment type="subunit">
    <text evidence="1">Part of the 30S ribosomal subunit.</text>
</comment>
<comment type="subcellular location">
    <subcellularLocation>
        <location>Plastid</location>
        <location>Chloroplast</location>
    </subcellularLocation>
</comment>
<comment type="similarity">
    <text evidence="1">Belongs to the universal ribosomal protein uS11 family.</text>
</comment>
<sequence length="130" mass="13844">MAKKIRKIGIRKGKRKIPKGVVHVQATFNNTIVTITDIKGEVISWSSAGSCGFKGTKKGTPFAAQTAAENAVRQAIEQGMKEAEITVSGPGSGRETAIRAIRTAGLGITVLKDVTPIPHNGCRPPKKRRV</sequence>
<proteinExistence type="inferred from homology"/>
<reference key="1">
    <citation type="journal article" date="2007" name="BMC Biol.">
        <title>A clade uniting the green algae Mesostigma viride and Chlorokybus atmophyticus represents the deepest branch of the Streptophyta in chloroplast genome-based phylogenies.</title>
        <authorList>
            <person name="Lemieux C."/>
            <person name="Otis C."/>
            <person name="Turmel M."/>
        </authorList>
    </citation>
    <scope>NUCLEOTIDE SEQUENCE [LARGE SCALE GENOMIC DNA]</scope>
    <source>
        <strain>SAG 48.80</strain>
    </source>
</reference>
<evidence type="ECO:0000255" key="1">
    <source>
        <dbReference type="HAMAP-Rule" id="MF_01310"/>
    </source>
</evidence>
<evidence type="ECO:0000305" key="2"/>
<organism>
    <name type="scientific">Chlorokybus atmophyticus</name>
    <name type="common">Soil alga</name>
    <dbReference type="NCBI Taxonomy" id="3144"/>
    <lineage>
        <taxon>Eukaryota</taxon>
        <taxon>Viridiplantae</taxon>
        <taxon>Streptophyta</taxon>
        <taxon>Chlorokybophyceae</taxon>
        <taxon>Chlorokybales</taxon>
        <taxon>Chlorokybaceae</taxon>
        <taxon>Chlorokybus</taxon>
    </lineage>
</organism>